<name>WDY_DROGR</name>
<reference evidence="7" key="1">
    <citation type="journal article" date="2007" name="Nature">
        <title>Evolution of genes and genomes on the Drosophila phylogeny.</title>
        <authorList>
            <consortium name="Drosophila 12 genomes consortium"/>
        </authorList>
    </citation>
    <scope>NUCLEOTIDE SEQUENCE [LARGE SCALE GENOMIC DNA]</scope>
    <source>
        <strain evidence="3">Tucson 15287-2541.00</strain>
    </source>
</reference>
<reference evidence="5 6" key="2">
    <citation type="journal article" date="2008" name="Nature">
        <title>Low conservation of gene content in the Drosophila Y chromosome.</title>
        <authorList>
            <person name="Koerich L.B."/>
            <person name="Wang X."/>
            <person name="Clark A.G."/>
            <person name="Carvalho A.B."/>
        </authorList>
    </citation>
    <scope>IDENTIFICATION</scope>
</reference>
<gene>
    <name evidence="6" type="primary">WDY</name>
    <name type="ORF">GH17261</name>
</gene>
<protein>
    <recommendedName>
        <fullName evidence="4 6">WD repeat-containing protein on Y chromosome</fullName>
        <shortName evidence="4">WD40 Y</shortName>
    </recommendedName>
</protein>
<sequence>MSMVYLASGDSNANIEYQTISSTATQQLTQEQSERLHDRITKAQLQKLYDLFKSSPDQMVGYSELRHMLEDVDITFTDYTYTRLFLKINQNSDFMIDWNEFVSYLIFGFQEEDPSSQKEALTMPISAPPVVRKTEHRSAVCCITLLKVKSDQTPMEEIPELSANYSFGGEDSPENSGMWVTASREGQLRFWSAHMEPLRSAVSESSNLPYAVYCMSYAFYNNGKTHSKLVLGDYAGNVRILSYSPYLRGPFQAKPGAALVELVWADVLKGRIPLLIPREHINLHSELISCVYYSLHMNTLFASAEYRNTKKYRGRCPGLIMVSNDDRNNFRIPLGVSVFYVAESKNILVTGGPDTFVRIWDVYISSEPSAILTGHNGGIVAVFVQPEENKVYSVDYHKVIKVWDLQEHTLLQTFGELVRIIHHSETDIKYYYHSHLRDLLVAGRKLIQIKCCPRVRVDLTDGNTHAAPVSVVLYNRLFRNIVTCGLDSYIIVWDPWTGRRKIIMKNCHTKMIYGEIIDIEITAACFDPLEQFLLTGARDGSLKIWNYNNAVVVRNMSIQPDQEVTAVIWVIDRILAMGWDRQVTEFNDVAGREYGDPKKWAKFHTDDITCADVKLGEGVVTATYSGEIIFWKLETGQPYRRYNVMNPYQFIELKLNTEEEKLTRRSKRISSLMGAGRRTLVLQNFKPDEIKDYGANIPVSVQAVLFLQKRPMTKDHGSVFISLDTGYIQVYSHHQHGGFIKQFFAVHKVGDCVLTMASDRKNRFLYTGTAFGYIKIWHIVNYCIPQAEKTEVCMPRLRLDFIFLRKDLFLTRAKRVIRNQPEPMLVSSYKGHLKAINSIGFINLPKILFTGSHDYSCRLWTQGGRYLGTLGTVLPWSKLTPFERAGEDNRAYRLPPDIKKVASSTTLKVISGIQHTGTVKRAKAVDEREDERDVEEAASDVKNMFDRPLREPILGHHFQLPGRSVIEQRIDLDTTELCIPVYTHLRVYPSEMMEHLPTPPVIGQVRAENYLDHYMPVVGKVDPHDSAINIREPQKRAKAGSSSLLPARAGYSLGKPKTNSVLGMPRSSGAGLCKPRTSFTLSDYTPGNPKADFSSRNMKSNLSSGSPKAGIPKADSSHGSAKASCRLGSPKPDYISIKKRASFSPGTTPKTDFSPKAGKPKTNTMKSSNSH</sequence>
<keyword id="KW-1185">Reference proteome</keyword>
<keyword id="KW-0677">Repeat</keyword>
<keyword id="KW-0853">WD repeat</keyword>
<proteinExistence type="predicted"/>
<accession>B7FF06</accession>
<accession>B4JBK9</accession>
<evidence type="ECO:0000255" key="1"/>
<evidence type="ECO:0000256" key="2">
    <source>
        <dbReference type="SAM" id="MobiDB-lite"/>
    </source>
</evidence>
<evidence type="ECO:0000269" key="3">
    <source>
    </source>
</evidence>
<evidence type="ECO:0000303" key="4">
    <source>
    </source>
</evidence>
<evidence type="ECO:0000305" key="5"/>
<evidence type="ECO:0000312" key="6">
    <source>
        <dbReference type="EMBL" id="DAA06440.1"/>
    </source>
</evidence>
<evidence type="ECO:0000312" key="7">
    <source>
        <dbReference type="EMBL" id="EDW04032.1"/>
    </source>
</evidence>
<organism>
    <name type="scientific">Drosophila grimshawi</name>
    <name type="common">Hawaiian fruit fly</name>
    <name type="synonym">Idiomyia grimshawi</name>
    <dbReference type="NCBI Taxonomy" id="7222"/>
    <lineage>
        <taxon>Eukaryota</taxon>
        <taxon>Metazoa</taxon>
        <taxon>Ecdysozoa</taxon>
        <taxon>Arthropoda</taxon>
        <taxon>Hexapoda</taxon>
        <taxon>Insecta</taxon>
        <taxon>Pterygota</taxon>
        <taxon>Neoptera</taxon>
        <taxon>Endopterygota</taxon>
        <taxon>Diptera</taxon>
        <taxon>Brachycera</taxon>
        <taxon>Muscomorpha</taxon>
        <taxon>Ephydroidea</taxon>
        <taxon>Drosophilidae</taxon>
        <taxon>Drosophila</taxon>
        <taxon>Hawaiian Drosophila</taxon>
    </lineage>
</organism>
<dbReference type="EMBL" id="CH916368">
    <property type="protein sequence ID" value="EDW04032.1"/>
    <property type="status" value="ALT_SEQ"/>
    <property type="molecule type" value="Genomic_DNA"/>
</dbReference>
<dbReference type="EMBL" id="BK006443">
    <property type="protein sequence ID" value="DAA06440.1"/>
    <property type="molecule type" value="Genomic_DNA"/>
</dbReference>
<dbReference type="RefSeq" id="XP_001989165.1">
    <property type="nucleotide sequence ID" value="XM_001989129.1"/>
</dbReference>
<dbReference type="STRING" id="7222.B7FF06"/>
<dbReference type="eggNOG" id="KOG0274">
    <property type="taxonomic scope" value="Eukaryota"/>
</dbReference>
<dbReference type="InParanoid" id="B7FF06"/>
<dbReference type="OrthoDB" id="5980302at2759"/>
<dbReference type="ChiTaRS" id="WDY">
    <property type="organism name" value="fly"/>
</dbReference>
<dbReference type="Proteomes" id="UP000001070">
    <property type="component" value="Unassembled WGS sequence"/>
</dbReference>
<dbReference type="Gene3D" id="1.10.238.10">
    <property type="entry name" value="EF-hand"/>
    <property type="match status" value="1"/>
</dbReference>
<dbReference type="Gene3D" id="2.130.10.10">
    <property type="entry name" value="YVTN repeat-like/Quinoprotein amine dehydrogenase"/>
    <property type="match status" value="2"/>
</dbReference>
<dbReference type="InterPro" id="IPR011992">
    <property type="entry name" value="EF-hand-dom_pair"/>
</dbReference>
<dbReference type="InterPro" id="IPR051242">
    <property type="entry name" value="WD-EF-hand_domain"/>
</dbReference>
<dbReference type="InterPro" id="IPR015943">
    <property type="entry name" value="WD40/YVTN_repeat-like_dom_sf"/>
</dbReference>
<dbReference type="InterPro" id="IPR036322">
    <property type="entry name" value="WD40_repeat_dom_sf"/>
</dbReference>
<dbReference type="InterPro" id="IPR001680">
    <property type="entry name" value="WD40_rpt"/>
</dbReference>
<dbReference type="PANTHER" id="PTHR44324:SF6">
    <property type="entry name" value="EF-HAND CALCIUM BINDING DOMAIN 8"/>
    <property type="match status" value="1"/>
</dbReference>
<dbReference type="PANTHER" id="PTHR44324">
    <property type="entry name" value="WD40 REPEAT DOMAIN 95"/>
    <property type="match status" value="1"/>
</dbReference>
<dbReference type="Pfam" id="PF00400">
    <property type="entry name" value="WD40"/>
    <property type="match status" value="3"/>
</dbReference>
<dbReference type="SMART" id="SM00320">
    <property type="entry name" value="WD40"/>
    <property type="match status" value="8"/>
</dbReference>
<dbReference type="SUPFAM" id="SSF47473">
    <property type="entry name" value="EF-hand"/>
    <property type="match status" value="1"/>
</dbReference>
<dbReference type="SUPFAM" id="SSF50978">
    <property type="entry name" value="WD40 repeat-like"/>
    <property type="match status" value="2"/>
</dbReference>
<dbReference type="PROSITE" id="PS00678">
    <property type="entry name" value="WD_REPEATS_1"/>
    <property type="match status" value="1"/>
</dbReference>
<dbReference type="PROSITE" id="PS50082">
    <property type="entry name" value="WD_REPEATS_2"/>
    <property type="match status" value="4"/>
</dbReference>
<dbReference type="PROSITE" id="PS50294">
    <property type="entry name" value="WD_REPEATS_REGION"/>
    <property type="match status" value="1"/>
</dbReference>
<comment type="sequence caution" evidence="5">
    <conflict type="erroneous gene model prediction">
        <sequence resource="EMBL-CDS" id="EDW04032"/>
    </conflict>
</comment>
<feature type="chain" id="PRO_0000378996" description="WD repeat-containing protein on Y chromosome">
    <location>
        <begin position="1"/>
        <end position="1171"/>
    </location>
</feature>
<feature type="repeat" description="WD 1" evidence="1">
    <location>
        <begin position="157"/>
        <end position="201"/>
    </location>
</feature>
<feature type="repeat" description="WD 2" evidence="1">
    <location>
        <begin position="331"/>
        <end position="370"/>
    </location>
</feature>
<feature type="repeat" description="WD 3" evidence="1">
    <location>
        <begin position="374"/>
        <end position="413"/>
    </location>
</feature>
<feature type="repeat" description="WD 4" evidence="1">
    <location>
        <begin position="464"/>
        <end position="503"/>
    </location>
</feature>
<feature type="repeat" description="WD 5" evidence="1">
    <location>
        <begin position="516"/>
        <end position="555"/>
    </location>
</feature>
<feature type="repeat" description="WD 6" evidence="1">
    <location>
        <begin position="603"/>
        <end position="643"/>
    </location>
</feature>
<feature type="repeat" description="WD 7" evidence="1">
    <location>
        <begin position="748"/>
        <end position="787"/>
    </location>
</feature>
<feature type="repeat" description="WD 8" evidence="1">
    <location>
        <begin position="831"/>
        <end position="870"/>
    </location>
</feature>
<feature type="region of interest" description="Disordered" evidence="2">
    <location>
        <begin position="1076"/>
        <end position="1171"/>
    </location>
</feature>
<feature type="compositionally biased region" description="Polar residues" evidence="2">
    <location>
        <begin position="1094"/>
        <end position="1106"/>
    </location>
</feature>
<feature type="compositionally biased region" description="Polar residues" evidence="2">
    <location>
        <begin position="1161"/>
        <end position="1171"/>
    </location>
</feature>